<comment type="function">
    <text evidence="1">Catalyzes the conversion of D-ribulose 5-phosphate to formate and 3,4-dihydroxy-2-butanone 4-phosphate.</text>
</comment>
<comment type="catalytic activity">
    <reaction evidence="1">
        <text>D-ribulose 5-phosphate = (2S)-2-hydroxy-3-oxobutyl phosphate + formate + H(+)</text>
        <dbReference type="Rhea" id="RHEA:18457"/>
        <dbReference type="ChEBI" id="CHEBI:15378"/>
        <dbReference type="ChEBI" id="CHEBI:15740"/>
        <dbReference type="ChEBI" id="CHEBI:58121"/>
        <dbReference type="ChEBI" id="CHEBI:58830"/>
        <dbReference type="EC" id="4.1.99.12"/>
    </reaction>
</comment>
<comment type="cofactor">
    <cofactor evidence="1">
        <name>Mg(2+)</name>
        <dbReference type="ChEBI" id="CHEBI:18420"/>
    </cofactor>
    <cofactor evidence="1">
        <name>Mn(2+)</name>
        <dbReference type="ChEBI" id="CHEBI:29035"/>
    </cofactor>
    <text evidence="1">Binds 2 divalent metal cations per subunit. Magnesium or manganese.</text>
</comment>
<comment type="pathway">
    <text evidence="1">Cofactor biosynthesis; riboflavin biosynthesis; 2-hydroxy-3-oxobutyl phosphate from D-ribulose 5-phosphate: step 1/1.</text>
</comment>
<comment type="subunit">
    <text evidence="1">Homodimer.</text>
</comment>
<comment type="similarity">
    <text evidence="1">Belongs to the DHBP synthase family.</text>
</comment>
<feature type="chain" id="PRO_1000040637" description="3,4-dihydroxy-2-butanone 4-phosphate synthase">
    <location>
        <begin position="1"/>
        <end position="217"/>
    </location>
</feature>
<feature type="binding site" evidence="1">
    <location>
        <begin position="37"/>
        <end position="38"/>
    </location>
    <ligand>
        <name>D-ribulose 5-phosphate</name>
        <dbReference type="ChEBI" id="CHEBI:58121"/>
    </ligand>
</feature>
<feature type="binding site" evidence="1">
    <location>
        <position position="38"/>
    </location>
    <ligand>
        <name>Mg(2+)</name>
        <dbReference type="ChEBI" id="CHEBI:18420"/>
        <label>1</label>
    </ligand>
</feature>
<feature type="binding site" evidence="1">
    <location>
        <position position="38"/>
    </location>
    <ligand>
        <name>Mg(2+)</name>
        <dbReference type="ChEBI" id="CHEBI:18420"/>
        <label>2</label>
    </ligand>
</feature>
<feature type="binding site" evidence="1">
    <location>
        <position position="42"/>
    </location>
    <ligand>
        <name>D-ribulose 5-phosphate</name>
        <dbReference type="ChEBI" id="CHEBI:58121"/>
    </ligand>
</feature>
<feature type="binding site" evidence="1">
    <location>
        <begin position="150"/>
        <end position="154"/>
    </location>
    <ligand>
        <name>D-ribulose 5-phosphate</name>
        <dbReference type="ChEBI" id="CHEBI:58121"/>
    </ligand>
</feature>
<feature type="binding site" evidence="1">
    <location>
        <position position="153"/>
    </location>
    <ligand>
        <name>Mg(2+)</name>
        <dbReference type="ChEBI" id="CHEBI:18420"/>
        <label>2</label>
    </ligand>
</feature>
<feature type="binding site" evidence="1">
    <location>
        <position position="174"/>
    </location>
    <ligand>
        <name>D-ribulose 5-phosphate</name>
        <dbReference type="ChEBI" id="CHEBI:58121"/>
    </ligand>
</feature>
<feature type="site" description="Essential for catalytic activity" evidence="1">
    <location>
        <position position="136"/>
    </location>
</feature>
<feature type="site" description="Essential for catalytic activity" evidence="1">
    <location>
        <position position="174"/>
    </location>
</feature>
<gene>
    <name evidence="1" type="primary">ribB</name>
    <name type="ordered locus">SSON_3178</name>
</gene>
<organism>
    <name type="scientific">Shigella sonnei (strain Ss046)</name>
    <dbReference type="NCBI Taxonomy" id="300269"/>
    <lineage>
        <taxon>Bacteria</taxon>
        <taxon>Pseudomonadati</taxon>
        <taxon>Pseudomonadota</taxon>
        <taxon>Gammaproteobacteria</taxon>
        <taxon>Enterobacterales</taxon>
        <taxon>Enterobacteriaceae</taxon>
        <taxon>Shigella</taxon>
    </lineage>
</organism>
<sequence>MNQTLLSSFGTPFERVENALAALREGRGVMVLDDEDRENEGDMIFPAETMTVEQMALTIRHGSGIVCLCITEDRRKQLDLPMMVENNTSAYGTGFTVTIEAAEGVTTGVSAADRITTVRAAIADGAKPSDLNRPGHVFPLRAQAGGVLTRGGHTEATIDLMTLAGFKPAGVLCELTNDDGTMARAPECIEFANKHNMALVTIEDLVAYRQAHERKAS</sequence>
<name>RIBB_SHISS</name>
<evidence type="ECO:0000255" key="1">
    <source>
        <dbReference type="HAMAP-Rule" id="MF_00180"/>
    </source>
</evidence>
<reference key="1">
    <citation type="journal article" date="2005" name="Nucleic Acids Res.">
        <title>Genome dynamics and diversity of Shigella species, the etiologic agents of bacillary dysentery.</title>
        <authorList>
            <person name="Yang F."/>
            <person name="Yang J."/>
            <person name="Zhang X."/>
            <person name="Chen L."/>
            <person name="Jiang Y."/>
            <person name="Yan Y."/>
            <person name="Tang X."/>
            <person name="Wang J."/>
            <person name="Xiong Z."/>
            <person name="Dong J."/>
            <person name="Xue Y."/>
            <person name="Zhu Y."/>
            <person name="Xu X."/>
            <person name="Sun L."/>
            <person name="Chen S."/>
            <person name="Nie H."/>
            <person name="Peng J."/>
            <person name="Xu J."/>
            <person name="Wang Y."/>
            <person name="Yuan Z."/>
            <person name="Wen Y."/>
            <person name="Yao Z."/>
            <person name="Shen Y."/>
            <person name="Qiang B."/>
            <person name="Hou Y."/>
            <person name="Yu J."/>
            <person name="Jin Q."/>
        </authorList>
    </citation>
    <scope>NUCLEOTIDE SEQUENCE [LARGE SCALE GENOMIC DNA]</scope>
    <source>
        <strain>Ss046</strain>
    </source>
</reference>
<protein>
    <recommendedName>
        <fullName evidence="1">3,4-dihydroxy-2-butanone 4-phosphate synthase</fullName>
        <shortName evidence="1">DHBP synthase</shortName>
        <ecNumber evidence="1">4.1.99.12</ecNumber>
    </recommendedName>
</protein>
<dbReference type="EC" id="4.1.99.12" evidence="1"/>
<dbReference type="EMBL" id="CP000038">
    <property type="protein sequence ID" value="AAZ89762.1"/>
    <property type="molecule type" value="Genomic_DNA"/>
</dbReference>
<dbReference type="RefSeq" id="WP_001076997.1">
    <property type="nucleotide sequence ID" value="NC_007384.1"/>
</dbReference>
<dbReference type="SMR" id="Q3YXK0"/>
<dbReference type="GeneID" id="93778953"/>
<dbReference type="KEGG" id="ssn:SSON_3178"/>
<dbReference type="HOGENOM" id="CLU_020273_3_0_6"/>
<dbReference type="UniPathway" id="UPA00275">
    <property type="reaction ID" value="UER00399"/>
</dbReference>
<dbReference type="Proteomes" id="UP000002529">
    <property type="component" value="Chromosome"/>
</dbReference>
<dbReference type="GO" id="GO:0005829">
    <property type="term" value="C:cytosol"/>
    <property type="evidence" value="ECO:0007669"/>
    <property type="project" value="TreeGrafter"/>
</dbReference>
<dbReference type="GO" id="GO:0008686">
    <property type="term" value="F:3,4-dihydroxy-2-butanone-4-phosphate synthase activity"/>
    <property type="evidence" value="ECO:0007669"/>
    <property type="project" value="UniProtKB-UniRule"/>
</dbReference>
<dbReference type="GO" id="GO:0000287">
    <property type="term" value="F:magnesium ion binding"/>
    <property type="evidence" value="ECO:0007669"/>
    <property type="project" value="UniProtKB-UniRule"/>
</dbReference>
<dbReference type="GO" id="GO:0030145">
    <property type="term" value="F:manganese ion binding"/>
    <property type="evidence" value="ECO:0007669"/>
    <property type="project" value="UniProtKB-UniRule"/>
</dbReference>
<dbReference type="GO" id="GO:0009231">
    <property type="term" value="P:riboflavin biosynthetic process"/>
    <property type="evidence" value="ECO:0007669"/>
    <property type="project" value="UniProtKB-UniRule"/>
</dbReference>
<dbReference type="FunFam" id="3.90.870.10:FF:000002">
    <property type="entry name" value="3,4-dihydroxy-2-butanone 4-phosphate synthase"/>
    <property type="match status" value="1"/>
</dbReference>
<dbReference type="Gene3D" id="3.90.870.10">
    <property type="entry name" value="DHBP synthase"/>
    <property type="match status" value="1"/>
</dbReference>
<dbReference type="HAMAP" id="MF_00180">
    <property type="entry name" value="RibB"/>
    <property type="match status" value="1"/>
</dbReference>
<dbReference type="InterPro" id="IPR017945">
    <property type="entry name" value="DHBP_synth_RibB-like_a/b_dom"/>
</dbReference>
<dbReference type="InterPro" id="IPR000422">
    <property type="entry name" value="DHBP_synthase_RibB"/>
</dbReference>
<dbReference type="NCBIfam" id="TIGR00506">
    <property type="entry name" value="ribB"/>
    <property type="match status" value="1"/>
</dbReference>
<dbReference type="PANTHER" id="PTHR21327:SF38">
    <property type="entry name" value="3,4-DIHYDROXY-2-BUTANONE 4-PHOSPHATE SYNTHASE"/>
    <property type="match status" value="1"/>
</dbReference>
<dbReference type="PANTHER" id="PTHR21327">
    <property type="entry name" value="GTP CYCLOHYDROLASE II-RELATED"/>
    <property type="match status" value="1"/>
</dbReference>
<dbReference type="Pfam" id="PF00926">
    <property type="entry name" value="DHBP_synthase"/>
    <property type="match status" value="1"/>
</dbReference>
<dbReference type="SUPFAM" id="SSF55821">
    <property type="entry name" value="YrdC/RibB"/>
    <property type="match status" value="1"/>
</dbReference>
<accession>Q3YXK0</accession>
<keyword id="KW-0456">Lyase</keyword>
<keyword id="KW-0460">Magnesium</keyword>
<keyword id="KW-0464">Manganese</keyword>
<keyword id="KW-0479">Metal-binding</keyword>
<keyword id="KW-1185">Reference proteome</keyword>
<keyword id="KW-0686">Riboflavin biosynthesis</keyword>
<proteinExistence type="inferred from homology"/>